<organism>
    <name type="scientific">Camellia hiemalis</name>
    <name type="common">Camellia</name>
    <dbReference type="NCBI Taxonomy" id="1840584"/>
    <lineage>
        <taxon>Eukaryota</taxon>
        <taxon>Viridiplantae</taxon>
        <taxon>Streptophyta</taxon>
        <taxon>Embryophyta</taxon>
        <taxon>Tracheophyta</taxon>
        <taxon>Spermatophyta</taxon>
        <taxon>Magnoliopsida</taxon>
        <taxon>eudicotyledons</taxon>
        <taxon>Gunneridae</taxon>
        <taxon>Pentapetalae</taxon>
        <taxon>asterids</taxon>
        <taxon>Ericales</taxon>
        <taxon>Theaceae</taxon>
        <taxon>Camellia</taxon>
    </lineage>
</organism>
<comment type="function">
    <text evidence="2">Terpene synthase that catalyzes the biosynthesis of the terpene valerianol, which is a volatile compound of floral scent.</text>
</comment>
<comment type="catalytic activity">
    <reaction evidence="2">
        <text>(2E,6E)-farnesyl diphosphate + H2O = valerianol + diphosphate</text>
        <dbReference type="Rhea" id="RHEA:60424"/>
        <dbReference type="ChEBI" id="CHEBI:15377"/>
        <dbReference type="ChEBI" id="CHEBI:33019"/>
        <dbReference type="ChEBI" id="CHEBI:143779"/>
        <dbReference type="ChEBI" id="CHEBI:175763"/>
        <dbReference type="EC" id="4.2.3.204"/>
    </reaction>
    <physiologicalReaction direction="left-to-right" evidence="2">
        <dbReference type="Rhea" id="RHEA:60425"/>
    </physiologicalReaction>
</comment>
<comment type="cofactor">
    <cofactor evidence="1">
        <name>Mg(2+)</name>
        <dbReference type="ChEBI" id="CHEBI:18420"/>
    </cofactor>
    <text evidence="1">Binds 3 Mg(2+) ions per subunit.</text>
</comment>
<comment type="pathway">
    <text evidence="4">Secondary metabolite biosynthesis; terpenoid biosynthesis.</text>
</comment>
<comment type="domain">
    <text evidence="4">The Asp-Asp-Xaa-Xaa-Asp/Glu (DDXXD/E) motif is important for the catalytic activity, presumably through binding to Mg(2+).</text>
</comment>
<comment type="similarity">
    <text evidence="4">Belongs to the terpene synthase family.</text>
</comment>
<dbReference type="EC" id="4.2.3.204" evidence="2"/>
<dbReference type="EMBL" id="LC212981">
    <property type="protein sequence ID" value="BBC44641.1"/>
    <property type="molecule type" value="mRNA"/>
</dbReference>
<dbReference type="SMR" id="A0A348AUW0"/>
<dbReference type="UniPathway" id="UPA00213"/>
<dbReference type="GO" id="GO:0016838">
    <property type="term" value="F:carbon-oxygen lyase activity, acting on phosphates"/>
    <property type="evidence" value="ECO:0000314"/>
    <property type="project" value="UniProtKB"/>
</dbReference>
<dbReference type="GO" id="GO:0000287">
    <property type="term" value="F:magnesium ion binding"/>
    <property type="evidence" value="ECO:0007669"/>
    <property type="project" value="InterPro"/>
</dbReference>
<dbReference type="GO" id="GO:0010333">
    <property type="term" value="F:terpene synthase activity"/>
    <property type="evidence" value="ECO:0007669"/>
    <property type="project" value="InterPro"/>
</dbReference>
<dbReference type="GO" id="GO:0016102">
    <property type="term" value="P:diterpenoid biosynthetic process"/>
    <property type="evidence" value="ECO:0007669"/>
    <property type="project" value="InterPro"/>
</dbReference>
<dbReference type="GO" id="GO:0016106">
    <property type="term" value="P:sesquiterpenoid biosynthetic process"/>
    <property type="evidence" value="ECO:0000314"/>
    <property type="project" value="UniProtKB"/>
</dbReference>
<dbReference type="CDD" id="cd00684">
    <property type="entry name" value="Terpene_cyclase_plant_C1"/>
    <property type="match status" value="1"/>
</dbReference>
<dbReference type="FunFam" id="1.10.600.10:FF:000007">
    <property type="entry name" value="Isoprene synthase, chloroplastic"/>
    <property type="match status" value="1"/>
</dbReference>
<dbReference type="FunFam" id="1.50.10.130:FF:000001">
    <property type="entry name" value="Isoprene synthase, chloroplastic"/>
    <property type="match status" value="1"/>
</dbReference>
<dbReference type="Gene3D" id="1.10.600.10">
    <property type="entry name" value="Farnesyl Diphosphate Synthase"/>
    <property type="match status" value="1"/>
</dbReference>
<dbReference type="Gene3D" id="1.50.10.130">
    <property type="entry name" value="Terpene synthase, N-terminal domain"/>
    <property type="match status" value="1"/>
</dbReference>
<dbReference type="InterPro" id="IPR008949">
    <property type="entry name" value="Isoprenoid_synthase_dom_sf"/>
</dbReference>
<dbReference type="InterPro" id="IPR034741">
    <property type="entry name" value="Terpene_cyclase-like_1_C"/>
</dbReference>
<dbReference type="InterPro" id="IPR044814">
    <property type="entry name" value="Terpene_cyclase_plant_C1"/>
</dbReference>
<dbReference type="InterPro" id="IPR001906">
    <property type="entry name" value="Terpene_synth_N"/>
</dbReference>
<dbReference type="InterPro" id="IPR036965">
    <property type="entry name" value="Terpene_synth_N_sf"/>
</dbReference>
<dbReference type="InterPro" id="IPR050148">
    <property type="entry name" value="Terpene_synthase-like"/>
</dbReference>
<dbReference type="InterPro" id="IPR005630">
    <property type="entry name" value="Terpene_synthase_metal-bd"/>
</dbReference>
<dbReference type="InterPro" id="IPR008930">
    <property type="entry name" value="Terpenoid_cyclase/PrenylTrfase"/>
</dbReference>
<dbReference type="PANTHER" id="PTHR31225:SF93">
    <property type="entry name" value="ALPHA-HUMULENE_(-)-(E)-BETA-CARYOPHYLLENE SYNTHASE"/>
    <property type="match status" value="1"/>
</dbReference>
<dbReference type="PANTHER" id="PTHR31225">
    <property type="entry name" value="OS04G0344100 PROTEIN-RELATED"/>
    <property type="match status" value="1"/>
</dbReference>
<dbReference type="Pfam" id="PF01397">
    <property type="entry name" value="Terpene_synth"/>
    <property type="match status" value="1"/>
</dbReference>
<dbReference type="Pfam" id="PF03936">
    <property type="entry name" value="Terpene_synth_C"/>
    <property type="match status" value="1"/>
</dbReference>
<dbReference type="SFLD" id="SFLDS00005">
    <property type="entry name" value="Isoprenoid_Synthase_Type_I"/>
    <property type="match status" value="1"/>
</dbReference>
<dbReference type="SFLD" id="SFLDG01019">
    <property type="entry name" value="Terpene_Cyclase_Like_1_C_Termi"/>
    <property type="match status" value="1"/>
</dbReference>
<dbReference type="SUPFAM" id="SSF48239">
    <property type="entry name" value="Terpenoid cyclases/Protein prenyltransferases"/>
    <property type="match status" value="1"/>
</dbReference>
<dbReference type="SUPFAM" id="SSF48576">
    <property type="entry name" value="Terpenoid synthases"/>
    <property type="match status" value="1"/>
</dbReference>
<sequence>MASSQVGDMVNGNAEPTRHLAKFPPSLWGDRFTSFTLDKQLWDKYGNEIEVLKEQVRSMVVAGGRKAAEQINLINVLERLGVSYHFEKEIEEQLEQLFAKFEDNEDYDLFTIALHFRIFRQHGYKMSCDVFNKFRDSNCEFKETVSNDVQGMLSLYEATYLKIRGEGFLDEAHAFTIAQLESLVEGPHLSSDLSEQVMHALKQSIHRGFPRLEAKHFISFYEKDASRNETLLRLAKLDFNQLQLSHREELCHIFRWWKELDLISKVPYARDRAVECFFWSTCAYYEPQHSVGRAGLTKIMLLLSVTDDTYDAYGTYNELKLYTNAVQRWDVSAMDELPDYMKALYRALLNVYDEVERDLAKQGRAYGVHHSKEAFKEIVRSYEIEAEWFKEGYVASFEEYMKNALVTSTGRLHTTSCFMGLEADVATTEAFEWILTKPKMVAASGAIGRLVDDVMSHDEEQERGHVATGLDCYMKQHGVSKQEAIVELYKMIENAWRDINEEMLKPTAISMKLLIRVLNLSRISDVVYKYVDGYTHPEIINDHVISLFEDPIPM</sequence>
<gene>
    <name evidence="3" type="primary">TPS1F</name>
</gene>
<evidence type="ECO:0000250" key="1">
    <source>
        <dbReference type="UniProtKB" id="Q40577"/>
    </source>
</evidence>
<evidence type="ECO:0000269" key="2">
    <source>
    </source>
</evidence>
<evidence type="ECO:0000303" key="3">
    <source>
    </source>
</evidence>
<evidence type="ECO:0000305" key="4"/>
<reference key="1">
    <citation type="journal article" date="2018" name="Sci. Rep.">
        <title>Identification of novel sesquiterpene synthase genes that mediate the biosynthesis of valerianol, which was an unknown ingredient of tea.</title>
        <authorList>
            <person name="Hattan J."/>
            <person name="Shindo K."/>
            <person name="Sasaki T."/>
            <person name="Ohno F."/>
            <person name="Tokuda H."/>
            <person name="Ishikawa K."/>
            <person name="Misawa N."/>
        </authorList>
    </citation>
    <scope>NUCLEOTIDE SEQUENCE [MRNA]</scope>
</reference>
<name>TPS1F_CAMHI</name>
<keyword id="KW-0456">Lyase</keyword>
<keyword id="KW-0460">Magnesium</keyword>
<keyword id="KW-0479">Metal-binding</keyword>
<proteinExistence type="evidence at transcript level"/>
<feature type="chain" id="PRO_0000451723" description="Valerianol synthase TPS1F">
    <location>
        <begin position="1"/>
        <end position="554"/>
    </location>
</feature>
<feature type="short sequence motif" description="DDXXD motif" evidence="4">
    <location>
        <begin position="326"/>
        <end position="330"/>
    </location>
</feature>
<feature type="binding site" evidence="1">
    <location>
        <position position="307"/>
    </location>
    <ligand>
        <name>Mg(2+)</name>
        <dbReference type="ChEBI" id="CHEBI:18420"/>
        <label>1</label>
    </ligand>
</feature>
<feature type="binding site" evidence="1">
    <location>
        <position position="307"/>
    </location>
    <ligand>
        <name>Mg(2+)</name>
        <dbReference type="ChEBI" id="CHEBI:18420"/>
        <label>2</label>
    </ligand>
</feature>
<feature type="binding site" evidence="1">
    <location>
        <position position="311"/>
    </location>
    <ligand>
        <name>Mg(2+)</name>
        <dbReference type="ChEBI" id="CHEBI:18420"/>
        <label>1</label>
    </ligand>
</feature>
<feature type="binding site" evidence="1">
    <location>
        <position position="311"/>
    </location>
    <ligand>
        <name>Mg(2+)</name>
        <dbReference type="ChEBI" id="CHEBI:18420"/>
        <label>2</label>
    </ligand>
</feature>
<feature type="binding site" evidence="1">
    <location>
        <position position="452"/>
    </location>
    <ligand>
        <name>Mg(2+)</name>
        <dbReference type="ChEBI" id="CHEBI:18420"/>
        <label>3</label>
    </ligand>
</feature>
<feature type="binding site" evidence="1">
    <location>
        <position position="456"/>
    </location>
    <ligand>
        <name>Mg(2+)</name>
        <dbReference type="ChEBI" id="CHEBI:18420"/>
        <label>3</label>
    </ligand>
</feature>
<feature type="binding site" evidence="1">
    <location>
        <position position="460"/>
    </location>
    <ligand>
        <name>Mg(2+)</name>
        <dbReference type="ChEBI" id="CHEBI:18420"/>
        <label>3</label>
    </ligand>
</feature>
<protein>
    <recommendedName>
        <fullName evidence="4">Valerianol synthase TPS1F</fullName>
        <ecNumber evidence="2">4.2.3.204</ecNumber>
    </recommendedName>
    <alternativeName>
        <fullName evidence="3">Terpene synthase 1f</fullName>
        <shortName evidence="3">ChTps1f</shortName>
    </alternativeName>
</protein>
<accession>A0A348AUW0</accession>